<feature type="chain" id="PRO_0000131269" description="Large ribosomal subunit protein uL18">
    <location>
        <begin position="1"/>
        <end position="120"/>
    </location>
</feature>
<feature type="region of interest" description="Disordered" evidence="2">
    <location>
        <begin position="1"/>
        <end position="22"/>
    </location>
</feature>
<feature type="compositionally biased region" description="Basic residues" evidence="2">
    <location>
        <begin position="8"/>
        <end position="20"/>
    </location>
</feature>
<protein>
    <recommendedName>
        <fullName evidence="1">Large ribosomal subunit protein uL18</fullName>
    </recommendedName>
    <alternativeName>
        <fullName evidence="3">50S ribosomal protein L18</fullName>
    </alternativeName>
</protein>
<sequence length="120" mass="13243">MKVDRKTATHRRHQRIRRKIAGTPEQPRLAVYRSNRHIYAQVIDDVHQRTLVAASTLEAPLRSGEEGTATCEAATAVGRLVAERAKEKGITAVVFDRGGKLYHGRVKAVADAAREAGLDF</sequence>
<reference key="1">
    <citation type="journal article" date="2003" name="DNA Res.">
        <title>Complete genome structure of Gloeobacter violaceus PCC 7421, a cyanobacterium that lacks thylakoids.</title>
        <authorList>
            <person name="Nakamura Y."/>
            <person name="Kaneko T."/>
            <person name="Sato S."/>
            <person name="Mimuro M."/>
            <person name="Miyashita H."/>
            <person name="Tsuchiya T."/>
            <person name="Sasamoto S."/>
            <person name="Watanabe A."/>
            <person name="Kawashima K."/>
            <person name="Kishida Y."/>
            <person name="Kiyokawa C."/>
            <person name="Kohara M."/>
            <person name="Matsumoto M."/>
            <person name="Matsuno A."/>
            <person name="Nakazaki N."/>
            <person name="Shimpo S."/>
            <person name="Takeuchi C."/>
            <person name="Yamada M."/>
            <person name="Tabata S."/>
        </authorList>
    </citation>
    <scope>NUCLEOTIDE SEQUENCE [LARGE SCALE GENOMIC DNA]</scope>
    <source>
        <strain>ATCC 29082 / PCC 7421</strain>
    </source>
</reference>
<proteinExistence type="inferred from homology"/>
<name>RL18_GLOVI</name>
<gene>
    <name evidence="1" type="primary">rplR</name>
    <name evidence="1" type="synonym">rpl18</name>
    <name type="ordered locus">gll3911</name>
</gene>
<evidence type="ECO:0000255" key="1">
    <source>
        <dbReference type="HAMAP-Rule" id="MF_01337"/>
    </source>
</evidence>
<evidence type="ECO:0000256" key="2">
    <source>
        <dbReference type="SAM" id="MobiDB-lite"/>
    </source>
</evidence>
<evidence type="ECO:0000305" key="3"/>
<comment type="function">
    <text evidence="1">This is one of the proteins that bind and probably mediate the attachment of the 5S RNA into the large ribosomal subunit, where it forms part of the central protuberance.</text>
</comment>
<comment type="subunit">
    <text evidence="1">Part of the 50S ribosomal subunit; part of the 5S rRNA/L5/L18/L25 subcomplex. Contacts the 5S and 23S rRNAs.</text>
</comment>
<comment type="similarity">
    <text evidence="1">Belongs to the universal ribosomal protein uL18 family.</text>
</comment>
<organism>
    <name type="scientific">Gloeobacter violaceus (strain ATCC 29082 / PCC 7421)</name>
    <dbReference type="NCBI Taxonomy" id="251221"/>
    <lineage>
        <taxon>Bacteria</taxon>
        <taxon>Bacillati</taxon>
        <taxon>Cyanobacteriota</taxon>
        <taxon>Cyanophyceae</taxon>
        <taxon>Gloeobacterales</taxon>
        <taxon>Gloeobacteraceae</taxon>
        <taxon>Gloeobacter</taxon>
    </lineage>
</organism>
<accession>Q7NEG8</accession>
<keyword id="KW-1185">Reference proteome</keyword>
<keyword id="KW-0687">Ribonucleoprotein</keyword>
<keyword id="KW-0689">Ribosomal protein</keyword>
<keyword id="KW-0694">RNA-binding</keyword>
<keyword id="KW-0699">rRNA-binding</keyword>
<dbReference type="EMBL" id="BA000045">
    <property type="protein sequence ID" value="BAC91852.1"/>
    <property type="molecule type" value="Genomic_DNA"/>
</dbReference>
<dbReference type="RefSeq" id="NP_926857.1">
    <property type="nucleotide sequence ID" value="NC_005125.1"/>
</dbReference>
<dbReference type="RefSeq" id="WP_011143899.1">
    <property type="nucleotide sequence ID" value="NC_005125.1"/>
</dbReference>
<dbReference type="SMR" id="Q7NEG8"/>
<dbReference type="FunCoup" id="Q7NEG8">
    <property type="interactions" value="236"/>
</dbReference>
<dbReference type="STRING" id="251221.gene:10761428"/>
<dbReference type="EnsemblBacteria" id="BAC91852">
    <property type="protein sequence ID" value="BAC91852"/>
    <property type="gene ID" value="BAC91852"/>
</dbReference>
<dbReference type="KEGG" id="gvi:gll3911"/>
<dbReference type="PATRIC" id="fig|251221.4.peg.3944"/>
<dbReference type="eggNOG" id="COG0256">
    <property type="taxonomic scope" value="Bacteria"/>
</dbReference>
<dbReference type="HOGENOM" id="CLU_098841_0_1_3"/>
<dbReference type="InParanoid" id="Q7NEG8"/>
<dbReference type="OrthoDB" id="9810939at2"/>
<dbReference type="PhylomeDB" id="Q7NEG8"/>
<dbReference type="Proteomes" id="UP000000557">
    <property type="component" value="Chromosome"/>
</dbReference>
<dbReference type="GO" id="GO:0022625">
    <property type="term" value="C:cytosolic large ribosomal subunit"/>
    <property type="evidence" value="ECO:0000318"/>
    <property type="project" value="GO_Central"/>
</dbReference>
<dbReference type="GO" id="GO:0008097">
    <property type="term" value="F:5S rRNA binding"/>
    <property type="evidence" value="ECO:0000318"/>
    <property type="project" value="GO_Central"/>
</dbReference>
<dbReference type="GO" id="GO:0003735">
    <property type="term" value="F:structural constituent of ribosome"/>
    <property type="evidence" value="ECO:0007669"/>
    <property type="project" value="InterPro"/>
</dbReference>
<dbReference type="GO" id="GO:0006412">
    <property type="term" value="P:translation"/>
    <property type="evidence" value="ECO:0007669"/>
    <property type="project" value="UniProtKB-UniRule"/>
</dbReference>
<dbReference type="CDD" id="cd00432">
    <property type="entry name" value="Ribosomal_L18_L5e"/>
    <property type="match status" value="1"/>
</dbReference>
<dbReference type="FunFam" id="3.30.420.100:FF:000001">
    <property type="entry name" value="50S ribosomal protein L18"/>
    <property type="match status" value="1"/>
</dbReference>
<dbReference type="Gene3D" id="3.30.420.100">
    <property type="match status" value="1"/>
</dbReference>
<dbReference type="HAMAP" id="MF_01337_B">
    <property type="entry name" value="Ribosomal_uL18_B"/>
    <property type="match status" value="1"/>
</dbReference>
<dbReference type="InterPro" id="IPR004389">
    <property type="entry name" value="Ribosomal_uL18_bac-type"/>
</dbReference>
<dbReference type="InterPro" id="IPR005484">
    <property type="entry name" value="Ribosomal_uL18_bac/euk"/>
</dbReference>
<dbReference type="NCBIfam" id="TIGR00060">
    <property type="entry name" value="L18_bact"/>
    <property type="match status" value="1"/>
</dbReference>
<dbReference type="PANTHER" id="PTHR12899">
    <property type="entry name" value="39S RIBOSOMAL PROTEIN L18, MITOCHONDRIAL"/>
    <property type="match status" value="1"/>
</dbReference>
<dbReference type="PANTHER" id="PTHR12899:SF3">
    <property type="entry name" value="LARGE RIBOSOMAL SUBUNIT PROTEIN UL18M"/>
    <property type="match status" value="1"/>
</dbReference>
<dbReference type="Pfam" id="PF00861">
    <property type="entry name" value="Ribosomal_L18p"/>
    <property type="match status" value="1"/>
</dbReference>
<dbReference type="SUPFAM" id="SSF53137">
    <property type="entry name" value="Translational machinery components"/>
    <property type="match status" value="1"/>
</dbReference>